<gene>
    <name evidence="1" type="primary">upp</name>
    <name type="ordered locus">SACOL2104</name>
</gene>
<proteinExistence type="inferred from homology"/>
<comment type="function">
    <text evidence="1">Catalyzes the conversion of uracil and 5-phospho-alpha-D-ribose 1-diphosphate (PRPP) to UMP and diphosphate.</text>
</comment>
<comment type="catalytic activity">
    <reaction evidence="1">
        <text>UMP + diphosphate = 5-phospho-alpha-D-ribose 1-diphosphate + uracil</text>
        <dbReference type="Rhea" id="RHEA:13017"/>
        <dbReference type="ChEBI" id="CHEBI:17568"/>
        <dbReference type="ChEBI" id="CHEBI:33019"/>
        <dbReference type="ChEBI" id="CHEBI:57865"/>
        <dbReference type="ChEBI" id="CHEBI:58017"/>
        <dbReference type="EC" id="2.4.2.9"/>
    </reaction>
</comment>
<comment type="cofactor">
    <cofactor evidence="1">
        <name>Mg(2+)</name>
        <dbReference type="ChEBI" id="CHEBI:18420"/>
    </cofactor>
    <text evidence="1">Binds 1 Mg(2+) ion per subunit. The magnesium is bound as Mg-PRPP.</text>
</comment>
<comment type="activity regulation">
    <text evidence="1">Allosterically activated by GTP.</text>
</comment>
<comment type="pathway">
    <text evidence="1">Pyrimidine metabolism; UMP biosynthesis via salvage pathway; UMP from uracil: step 1/1.</text>
</comment>
<comment type="similarity">
    <text evidence="1">Belongs to the UPRTase family.</text>
</comment>
<keyword id="KW-0021">Allosteric enzyme</keyword>
<keyword id="KW-0328">Glycosyltransferase</keyword>
<keyword id="KW-0342">GTP-binding</keyword>
<keyword id="KW-0460">Magnesium</keyword>
<keyword id="KW-0547">Nucleotide-binding</keyword>
<keyword id="KW-0808">Transferase</keyword>
<protein>
    <recommendedName>
        <fullName evidence="1">Uracil phosphoribosyltransferase</fullName>
        <ecNumber evidence="1">2.4.2.9</ecNumber>
    </recommendedName>
    <alternativeName>
        <fullName evidence="1">UMP pyrophosphorylase</fullName>
    </alternativeName>
    <alternativeName>
        <fullName evidence="1">UPRTase</fullName>
    </alternativeName>
</protein>
<sequence>MSKVHVFDHPLIQHKLSYIRDVNTGTKEFRELVDEVGMLMAYEVTRDLELQDVDIETPVTKMTAKRLAGKKLAIVPILRAGLGMTDGILSLVPAARVGHIGLYRDPETLKAVEYFAKLPQDITERQIIVVDPMLATGASAIEAITSLKKRGAKNIRFMCLIAAPEGVEKMHEAHPDVDIYIAALDEKLNDKAYITPGLGDAGDRLFGTK</sequence>
<organism>
    <name type="scientific">Staphylococcus aureus (strain COL)</name>
    <dbReference type="NCBI Taxonomy" id="93062"/>
    <lineage>
        <taxon>Bacteria</taxon>
        <taxon>Bacillati</taxon>
        <taxon>Bacillota</taxon>
        <taxon>Bacilli</taxon>
        <taxon>Bacillales</taxon>
        <taxon>Staphylococcaceae</taxon>
        <taxon>Staphylococcus</taxon>
    </lineage>
</organism>
<name>UPP_STAAC</name>
<reference key="1">
    <citation type="journal article" date="2005" name="J. Bacteriol.">
        <title>Insights on evolution of virulence and resistance from the complete genome analysis of an early methicillin-resistant Staphylococcus aureus strain and a biofilm-producing methicillin-resistant Staphylococcus epidermidis strain.</title>
        <authorList>
            <person name="Gill S.R."/>
            <person name="Fouts D.E."/>
            <person name="Archer G.L."/>
            <person name="Mongodin E.F."/>
            <person name="DeBoy R.T."/>
            <person name="Ravel J."/>
            <person name="Paulsen I.T."/>
            <person name="Kolonay J.F."/>
            <person name="Brinkac L.M."/>
            <person name="Beanan M.J."/>
            <person name="Dodson R.J."/>
            <person name="Daugherty S.C."/>
            <person name="Madupu R."/>
            <person name="Angiuoli S.V."/>
            <person name="Durkin A.S."/>
            <person name="Haft D.H."/>
            <person name="Vamathevan J.J."/>
            <person name="Khouri H."/>
            <person name="Utterback T.R."/>
            <person name="Lee C."/>
            <person name="Dimitrov G."/>
            <person name="Jiang L."/>
            <person name="Qin H."/>
            <person name="Weidman J."/>
            <person name="Tran K."/>
            <person name="Kang K.H."/>
            <person name="Hance I.R."/>
            <person name="Nelson K.E."/>
            <person name="Fraser C.M."/>
        </authorList>
    </citation>
    <scope>NUCLEOTIDE SEQUENCE [LARGE SCALE GENOMIC DNA]</scope>
    <source>
        <strain>COL</strain>
    </source>
</reference>
<dbReference type="EC" id="2.4.2.9" evidence="1"/>
<dbReference type="EMBL" id="CP000046">
    <property type="protein sequence ID" value="AAW38414.1"/>
    <property type="molecule type" value="Genomic_DNA"/>
</dbReference>
<dbReference type="RefSeq" id="WP_000048712.1">
    <property type="nucleotide sequence ID" value="NZ_JBGOFO010000007.1"/>
</dbReference>
<dbReference type="SMR" id="Q5HE88"/>
<dbReference type="KEGG" id="sac:SACOL2104"/>
<dbReference type="HOGENOM" id="CLU_067096_2_2_9"/>
<dbReference type="UniPathway" id="UPA00574">
    <property type="reaction ID" value="UER00636"/>
</dbReference>
<dbReference type="Proteomes" id="UP000000530">
    <property type="component" value="Chromosome"/>
</dbReference>
<dbReference type="GO" id="GO:0005525">
    <property type="term" value="F:GTP binding"/>
    <property type="evidence" value="ECO:0007669"/>
    <property type="project" value="UniProtKB-KW"/>
</dbReference>
<dbReference type="GO" id="GO:0000287">
    <property type="term" value="F:magnesium ion binding"/>
    <property type="evidence" value="ECO:0007669"/>
    <property type="project" value="UniProtKB-UniRule"/>
</dbReference>
<dbReference type="GO" id="GO:0004845">
    <property type="term" value="F:uracil phosphoribosyltransferase activity"/>
    <property type="evidence" value="ECO:0007669"/>
    <property type="project" value="UniProtKB-UniRule"/>
</dbReference>
<dbReference type="GO" id="GO:0044206">
    <property type="term" value="P:UMP salvage"/>
    <property type="evidence" value="ECO:0007669"/>
    <property type="project" value="UniProtKB-UniRule"/>
</dbReference>
<dbReference type="GO" id="GO:0006223">
    <property type="term" value="P:uracil salvage"/>
    <property type="evidence" value="ECO:0007669"/>
    <property type="project" value="InterPro"/>
</dbReference>
<dbReference type="CDD" id="cd06223">
    <property type="entry name" value="PRTases_typeI"/>
    <property type="match status" value="1"/>
</dbReference>
<dbReference type="FunFam" id="3.40.50.2020:FF:000003">
    <property type="entry name" value="Uracil phosphoribosyltransferase"/>
    <property type="match status" value="1"/>
</dbReference>
<dbReference type="Gene3D" id="3.40.50.2020">
    <property type="match status" value="1"/>
</dbReference>
<dbReference type="HAMAP" id="MF_01218_B">
    <property type="entry name" value="Upp_B"/>
    <property type="match status" value="1"/>
</dbReference>
<dbReference type="InterPro" id="IPR000836">
    <property type="entry name" value="PRibTrfase_dom"/>
</dbReference>
<dbReference type="InterPro" id="IPR029057">
    <property type="entry name" value="PRTase-like"/>
</dbReference>
<dbReference type="InterPro" id="IPR034332">
    <property type="entry name" value="Upp_B"/>
</dbReference>
<dbReference type="InterPro" id="IPR050054">
    <property type="entry name" value="UPRTase/APRTase"/>
</dbReference>
<dbReference type="InterPro" id="IPR005765">
    <property type="entry name" value="Ura_phspho_trans"/>
</dbReference>
<dbReference type="NCBIfam" id="NF001097">
    <property type="entry name" value="PRK00129.1"/>
    <property type="match status" value="1"/>
</dbReference>
<dbReference type="NCBIfam" id="TIGR01091">
    <property type="entry name" value="upp"/>
    <property type="match status" value="1"/>
</dbReference>
<dbReference type="PANTHER" id="PTHR32315">
    <property type="entry name" value="ADENINE PHOSPHORIBOSYLTRANSFERASE"/>
    <property type="match status" value="1"/>
</dbReference>
<dbReference type="PANTHER" id="PTHR32315:SF4">
    <property type="entry name" value="URACIL PHOSPHORIBOSYLTRANSFERASE, CHLOROPLASTIC"/>
    <property type="match status" value="1"/>
</dbReference>
<dbReference type="Pfam" id="PF14681">
    <property type="entry name" value="UPRTase"/>
    <property type="match status" value="1"/>
</dbReference>
<dbReference type="SUPFAM" id="SSF53271">
    <property type="entry name" value="PRTase-like"/>
    <property type="match status" value="1"/>
</dbReference>
<feature type="chain" id="PRO_0000120879" description="Uracil phosphoribosyltransferase">
    <location>
        <begin position="1"/>
        <end position="209"/>
    </location>
</feature>
<feature type="binding site" evidence="1">
    <location>
        <position position="79"/>
    </location>
    <ligand>
        <name>5-phospho-alpha-D-ribose 1-diphosphate</name>
        <dbReference type="ChEBI" id="CHEBI:58017"/>
    </ligand>
</feature>
<feature type="binding site" evidence="1">
    <location>
        <position position="104"/>
    </location>
    <ligand>
        <name>5-phospho-alpha-D-ribose 1-diphosphate</name>
        <dbReference type="ChEBI" id="CHEBI:58017"/>
    </ligand>
</feature>
<feature type="binding site" evidence="1">
    <location>
        <begin position="131"/>
        <end position="139"/>
    </location>
    <ligand>
        <name>5-phospho-alpha-D-ribose 1-diphosphate</name>
        <dbReference type="ChEBI" id="CHEBI:58017"/>
    </ligand>
</feature>
<feature type="binding site" evidence="1">
    <location>
        <position position="194"/>
    </location>
    <ligand>
        <name>uracil</name>
        <dbReference type="ChEBI" id="CHEBI:17568"/>
    </ligand>
</feature>
<feature type="binding site" evidence="1">
    <location>
        <begin position="199"/>
        <end position="201"/>
    </location>
    <ligand>
        <name>uracil</name>
        <dbReference type="ChEBI" id="CHEBI:17568"/>
    </ligand>
</feature>
<feature type="binding site" evidence="1">
    <location>
        <position position="200"/>
    </location>
    <ligand>
        <name>5-phospho-alpha-D-ribose 1-diphosphate</name>
        <dbReference type="ChEBI" id="CHEBI:58017"/>
    </ligand>
</feature>
<accession>Q5HE88</accession>
<evidence type="ECO:0000255" key="1">
    <source>
        <dbReference type="HAMAP-Rule" id="MF_01218"/>
    </source>
</evidence>